<name>CXB2_GORGO</name>
<protein>
    <recommendedName>
        <fullName>Gap junction beta-2 protein</fullName>
    </recommendedName>
    <alternativeName>
        <fullName>Connexin-26</fullName>
        <shortName>Cx26</shortName>
    </alternativeName>
</protein>
<comment type="function">
    <text evidence="1">Structural component of gap junctions. Gap junctions are dodecameric channels that connect the cytoplasm of adjoining cells. They are formed by the docking of two hexameric hemichannels, one from each cell membrane. Small molecules and ions diffuse from one cell to a neighboring cell via the central pore.</text>
</comment>
<comment type="subunit">
    <text evidence="1 2">A hemichannel or connexon is composed of a hexamer of connexins. A functional gap junction is formed by the apposition of two hemichannels (By similarity). Forms heteromeric channels with GJB4. Interacts with CNST (By similarity).</text>
</comment>
<comment type="subcellular location">
    <subcellularLocation>
        <location evidence="2">Cell membrane</location>
        <topology evidence="1">Multi-pass membrane protein</topology>
    </subcellularLocation>
    <subcellularLocation>
        <location evidence="2">Cell junction</location>
        <location evidence="2">Gap junction</location>
    </subcellularLocation>
    <text evidence="2">Colocalizes with GJB4 at gap junction plaques in the cochlea.</text>
</comment>
<comment type="similarity">
    <text evidence="3">Belongs to the connexin family. Beta-type (group I) subfamily.</text>
</comment>
<organism>
    <name type="scientific">Gorilla gorilla gorilla</name>
    <name type="common">Western lowland gorilla</name>
    <dbReference type="NCBI Taxonomy" id="9595"/>
    <lineage>
        <taxon>Eukaryota</taxon>
        <taxon>Metazoa</taxon>
        <taxon>Chordata</taxon>
        <taxon>Craniata</taxon>
        <taxon>Vertebrata</taxon>
        <taxon>Euteleostomi</taxon>
        <taxon>Mammalia</taxon>
        <taxon>Eutheria</taxon>
        <taxon>Euarchontoglires</taxon>
        <taxon>Primates</taxon>
        <taxon>Haplorrhini</taxon>
        <taxon>Catarrhini</taxon>
        <taxon>Hominidae</taxon>
        <taxon>Gorilla</taxon>
    </lineage>
</organism>
<feature type="chain" id="PRO_0000057854" description="Gap junction beta-2 protein">
    <location>
        <begin position="1"/>
        <end position="226"/>
    </location>
</feature>
<feature type="intramembrane region" evidence="1">
    <location>
        <begin position="2"/>
        <end position="13"/>
    </location>
</feature>
<feature type="topological domain" description="Cytoplasmic" evidence="3">
    <location>
        <begin position="14"/>
        <end position="20"/>
    </location>
</feature>
<feature type="transmembrane region" description="Helical" evidence="1">
    <location>
        <begin position="21"/>
        <end position="40"/>
    </location>
</feature>
<feature type="topological domain" description="Extracellular" evidence="3">
    <location>
        <begin position="41"/>
        <end position="73"/>
    </location>
</feature>
<feature type="transmembrane region" description="Helical" evidence="1">
    <location>
        <begin position="74"/>
        <end position="94"/>
    </location>
</feature>
<feature type="topological domain" description="Cytoplasmic" evidence="3">
    <location>
        <begin position="95"/>
        <end position="135"/>
    </location>
</feature>
<feature type="transmembrane region" description="Helical" evidence="1">
    <location>
        <begin position="136"/>
        <end position="156"/>
    </location>
</feature>
<feature type="topological domain" description="Extracellular" evidence="3">
    <location>
        <begin position="157"/>
        <end position="189"/>
    </location>
</feature>
<feature type="transmembrane region" description="Helical" evidence="1">
    <location>
        <begin position="190"/>
        <end position="210"/>
    </location>
</feature>
<feature type="topological domain" description="Cytoplasmic" evidence="3">
    <location>
        <begin position="211"/>
        <end position="226"/>
    </location>
</feature>
<feature type="binding site" description="in other chain" evidence="1">
    <location>
        <position position="42"/>
    </location>
    <ligand>
        <name>Ca(2+)</name>
        <dbReference type="ChEBI" id="CHEBI:29108"/>
        <note>ligand shared between two neighboring subunits</note>
    </ligand>
</feature>
<feature type="binding site" evidence="1">
    <location>
        <position position="45"/>
    </location>
    <ligand>
        <name>Ca(2+)</name>
        <dbReference type="ChEBI" id="CHEBI:29108"/>
        <note>ligand shared between two neighboring subunits</note>
    </ligand>
</feature>
<feature type="binding site" evidence="1">
    <location>
        <position position="47"/>
    </location>
    <ligand>
        <name>Ca(2+)</name>
        <dbReference type="ChEBI" id="CHEBI:29108"/>
        <note>ligand shared between two neighboring subunits</note>
    </ligand>
</feature>
<feature type="disulfide bond" evidence="1">
    <location>
        <begin position="53"/>
        <end position="180"/>
    </location>
</feature>
<feature type="disulfide bond" evidence="1">
    <location>
        <begin position="60"/>
        <end position="174"/>
    </location>
</feature>
<feature type="disulfide bond" evidence="1">
    <location>
        <begin position="64"/>
        <end position="169"/>
    </location>
</feature>
<dbReference type="EMBL" id="AY046581">
    <property type="protein sequence ID" value="AAL03973.1"/>
    <property type="molecule type" value="Genomic_DNA"/>
</dbReference>
<dbReference type="RefSeq" id="XP_004054267.1">
    <property type="nucleotide sequence ID" value="XM_004054219.4"/>
</dbReference>
<dbReference type="SMR" id="Q8MHW5"/>
<dbReference type="FunCoup" id="Q8MHW5">
    <property type="interactions" value="23"/>
</dbReference>
<dbReference type="STRING" id="9593.ENSGGOP00000016284"/>
<dbReference type="Ensembl" id="ENSGGOT00000016745.2">
    <property type="protein sequence ID" value="ENSGGOP00000016284.1"/>
    <property type="gene ID" value="ENSGGOG00000016693.2"/>
</dbReference>
<dbReference type="GeneID" id="101146823"/>
<dbReference type="KEGG" id="ggo:101146823"/>
<dbReference type="CTD" id="2706"/>
<dbReference type="eggNOG" id="ENOG502QWM8">
    <property type="taxonomic scope" value="Eukaryota"/>
</dbReference>
<dbReference type="GeneTree" id="ENSGT01030000234513"/>
<dbReference type="HOGENOM" id="CLU_037388_4_1_1"/>
<dbReference type="InParanoid" id="Q8MHW5"/>
<dbReference type="OMA" id="RMVKCNA"/>
<dbReference type="OrthoDB" id="872at9604"/>
<dbReference type="Proteomes" id="UP000001519">
    <property type="component" value="Chromosome 13"/>
</dbReference>
<dbReference type="Bgee" id="ENSGGOG00000016693">
    <property type="expression patterns" value="Expressed in liver and 4 other cell types or tissues"/>
</dbReference>
<dbReference type="GO" id="GO:0005922">
    <property type="term" value="C:connexin complex"/>
    <property type="evidence" value="ECO:0000250"/>
    <property type="project" value="UniProtKB"/>
</dbReference>
<dbReference type="GO" id="GO:0005886">
    <property type="term" value="C:plasma membrane"/>
    <property type="evidence" value="ECO:0000250"/>
    <property type="project" value="UniProtKB"/>
</dbReference>
<dbReference type="GO" id="GO:0005509">
    <property type="term" value="F:calcium ion binding"/>
    <property type="evidence" value="ECO:0000250"/>
    <property type="project" value="UniProtKB"/>
</dbReference>
<dbReference type="GO" id="GO:0005243">
    <property type="term" value="F:gap junction channel activity"/>
    <property type="evidence" value="ECO:0000250"/>
    <property type="project" value="UniProtKB"/>
</dbReference>
<dbReference type="GO" id="GO:1903763">
    <property type="term" value="F:gap junction channel activity involved in cell communication by electrical coupling"/>
    <property type="evidence" value="ECO:0007669"/>
    <property type="project" value="Ensembl"/>
</dbReference>
<dbReference type="GO" id="GO:0042802">
    <property type="term" value="F:identical protein binding"/>
    <property type="evidence" value="ECO:0007669"/>
    <property type="project" value="Ensembl"/>
</dbReference>
<dbReference type="GO" id="GO:0007267">
    <property type="term" value="P:cell-cell signaling"/>
    <property type="evidence" value="ECO:0000250"/>
    <property type="project" value="UniProtKB"/>
</dbReference>
<dbReference type="GO" id="GO:0016264">
    <property type="term" value="P:gap junction assembly"/>
    <property type="evidence" value="ECO:0007669"/>
    <property type="project" value="Ensembl"/>
</dbReference>
<dbReference type="GO" id="GO:1990349">
    <property type="term" value="P:gap junction-mediated intercellular transport"/>
    <property type="evidence" value="ECO:0000250"/>
    <property type="project" value="UniProtKB"/>
</dbReference>
<dbReference type="GO" id="GO:0007605">
    <property type="term" value="P:sensory perception of sound"/>
    <property type="evidence" value="ECO:0007669"/>
    <property type="project" value="UniProtKB-KW"/>
</dbReference>
<dbReference type="FunFam" id="1.20.1440.80:FF:000001">
    <property type="entry name" value="Gap junction alpha-1"/>
    <property type="match status" value="1"/>
</dbReference>
<dbReference type="Gene3D" id="1.20.1440.80">
    <property type="entry name" value="Gap junction channel protein cysteine-rich domain"/>
    <property type="match status" value="1"/>
</dbReference>
<dbReference type="InterPro" id="IPR000500">
    <property type="entry name" value="Connexin"/>
</dbReference>
<dbReference type="InterPro" id="IPR002268">
    <property type="entry name" value="Connexin26"/>
</dbReference>
<dbReference type="InterPro" id="IPR019570">
    <property type="entry name" value="Connexin_CCC"/>
</dbReference>
<dbReference type="InterPro" id="IPR017990">
    <property type="entry name" value="Connexin_CS"/>
</dbReference>
<dbReference type="InterPro" id="IPR013092">
    <property type="entry name" value="Connexin_N"/>
</dbReference>
<dbReference type="InterPro" id="IPR038359">
    <property type="entry name" value="Connexin_N_sf"/>
</dbReference>
<dbReference type="PANTHER" id="PTHR11984">
    <property type="entry name" value="CONNEXIN"/>
    <property type="match status" value="1"/>
</dbReference>
<dbReference type="PANTHER" id="PTHR11984:SF46">
    <property type="entry name" value="GAP JUNCTION BETA-2 PROTEIN"/>
    <property type="match status" value="1"/>
</dbReference>
<dbReference type="Pfam" id="PF00029">
    <property type="entry name" value="Connexin"/>
    <property type="match status" value="1"/>
</dbReference>
<dbReference type="PRINTS" id="PR00206">
    <property type="entry name" value="CONNEXIN"/>
</dbReference>
<dbReference type="PRINTS" id="PR01139">
    <property type="entry name" value="CONNEXINB2"/>
</dbReference>
<dbReference type="SMART" id="SM00037">
    <property type="entry name" value="CNX"/>
    <property type="match status" value="1"/>
</dbReference>
<dbReference type="SMART" id="SM01089">
    <property type="entry name" value="Connexin_CCC"/>
    <property type="match status" value="1"/>
</dbReference>
<dbReference type="PROSITE" id="PS00407">
    <property type="entry name" value="CONNEXINS_1"/>
    <property type="match status" value="1"/>
</dbReference>
<dbReference type="PROSITE" id="PS00408">
    <property type="entry name" value="CONNEXINS_2"/>
    <property type="match status" value="1"/>
</dbReference>
<sequence>MDWGTLQTILGGVNKHSTSIGKIWLTVLFIFRIMILVVAAKEVWGDEQADFVCNTLQPGCKNVCYDHYFPISHIRLWALQLIFVSTPALLVAMHVAYRRHEKKRKFIKGEIKSEFKDIEEIKTQKVRIEGSLWWTYTSSIFFRVIFEAAFMYVFYVMYDGFSMQRLVKCNAWPCPNTVDCFVSRPTEKTVFTVFMIAVSGICILLNVTELCYLLIRYCSGKSKKPV</sequence>
<accession>Q8MHW5</accession>
<reference key="1">
    <citation type="submission" date="2001-07" db="EMBL/GenBank/DDBJ databases">
        <title>Sequence comparison of primate connexin 26 (GJB2) genes.</title>
        <authorList>
            <person name="Orten D.J."/>
            <person name="Bizzarri-Kriener C."/>
            <person name="Askew J.W."/>
            <person name="Li J.-L."/>
            <person name="Louis E."/>
            <person name="Kelley P.M."/>
            <person name="Kimberling W.J."/>
        </authorList>
    </citation>
    <scope>NUCLEOTIDE SEQUENCE [GENOMIC DNA]</scope>
</reference>
<proteinExistence type="inferred from homology"/>
<evidence type="ECO:0000250" key="1">
    <source>
        <dbReference type="UniProtKB" id="P29033"/>
    </source>
</evidence>
<evidence type="ECO:0000250" key="2">
    <source>
        <dbReference type="UniProtKB" id="Q00977"/>
    </source>
</evidence>
<evidence type="ECO:0000305" key="3"/>
<gene>
    <name type="primary">GJB2</name>
</gene>
<keyword id="KW-0106">Calcium</keyword>
<keyword id="KW-0965">Cell junction</keyword>
<keyword id="KW-1003">Cell membrane</keyword>
<keyword id="KW-1015">Disulfide bond</keyword>
<keyword id="KW-0303">Gap junction</keyword>
<keyword id="KW-1009">Hearing</keyword>
<keyword id="KW-0472">Membrane</keyword>
<keyword id="KW-0479">Metal-binding</keyword>
<keyword id="KW-1185">Reference proteome</keyword>
<keyword id="KW-0812">Transmembrane</keyword>
<keyword id="KW-1133">Transmembrane helix</keyword>